<keyword id="KW-0007">Acetylation</keyword>
<keyword id="KW-0152">Cholesterol biosynthesis</keyword>
<keyword id="KW-0153">Cholesterol metabolism</keyword>
<keyword id="KW-0413">Isomerase</keyword>
<keyword id="KW-0414">Isoprene biosynthesis</keyword>
<keyword id="KW-0444">Lipid biosynthesis</keyword>
<keyword id="KW-0443">Lipid metabolism</keyword>
<keyword id="KW-0460">Magnesium</keyword>
<keyword id="KW-0479">Metal-binding</keyword>
<keyword id="KW-0576">Peroxisome</keyword>
<keyword id="KW-1185">Reference proteome</keyword>
<keyword id="KW-0752">Steroid biosynthesis</keyword>
<keyword id="KW-0753">Steroid metabolism</keyword>
<keyword id="KW-0756">Sterol biosynthesis</keyword>
<keyword id="KW-1207">Sterol metabolism</keyword>
<reference key="1">
    <citation type="journal article" date="1997" name="J. Biol. Chem.">
        <title>Cloning and subcellular localization of hamster and rat isopentenyl diphosphate dimethylallyl diphosphate isomerase. A PTS1 motif targets the enzyme to peroxisomes.</title>
        <authorList>
            <person name="Paton V.G."/>
            <person name="Shackelford J.E."/>
            <person name="Krisans S.K."/>
        </authorList>
    </citation>
    <scope>NUCLEOTIDE SEQUENCE [MRNA]</scope>
    <scope>SUBCELLULAR LOCATION</scope>
</reference>
<proteinExistence type="evidence at transcript level"/>
<feature type="chain" id="PRO_0000205224" description="Isopentenyl-diphosphate Delta-isomerase 1">
    <location>
        <begin position="1"/>
        <end position="227"/>
    </location>
</feature>
<feature type="domain" description="Nudix hydrolase" evidence="3">
    <location>
        <begin position="49"/>
        <end position="199"/>
    </location>
</feature>
<feature type="short sequence motif" description="Microbody targeting signal">
    <location>
        <begin position="225"/>
        <end position="227"/>
    </location>
</feature>
<feature type="active site">
    <location>
        <position position="86"/>
    </location>
</feature>
<feature type="active site">
    <location>
        <position position="148"/>
    </location>
</feature>
<feature type="binding site" evidence="1">
    <location>
        <position position="36"/>
    </location>
    <ligand>
        <name>substrate</name>
    </ligand>
</feature>
<feature type="binding site" evidence="1">
    <location>
        <position position="40"/>
    </location>
    <ligand>
        <name>Mg(2+)</name>
        <dbReference type="ChEBI" id="CHEBI:18420"/>
    </ligand>
</feature>
<feature type="binding site" evidence="1">
    <location>
        <position position="51"/>
    </location>
    <ligand>
        <name>Mg(2+)</name>
        <dbReference type="ChEBI" id="CHEBI:18420"/>
    </ligand>
</feature>
<feature type="binding site" evidence="1">
    <location>
        <position position="70"/>
    </location>
    <ligand>
        <name>substrate</name>
    </ligand>
</feature>
<feature type="binding site" evidence="1">
    <location>
        <position position="74"/>
    </location>
    <ligand>
        <name>substrate</name>
    </ligand>
</feature>
<feature type="binding site" evidence="1">
    <location>
        <position position="87"/>
    </location>
    <ligand>
        <name>substrate</name>
    </ligand>
</feature>
<feature type="binding site" evidence="1">
    <location>
        <position position="146"/>
    </location>
    <ligand>
        <name>Mg(2+)</name>
        <dbReference type="ChEBI" id="CHEBI:18420"/>
    </ligand>
</feature>
<feature type="binding site" evidence="1">
    <location>
        <position position="148"/>
    </location>
    <ligand>
        <name>Mg(2+)</name>
        <dbReference type="ChEBI" id="CHEBI:18420"/>
    </ligand>
</feature>
<feature type="modified residue" description="N6-acetyllysine" evidence="2">
    <location>
        <position position="176"/>
    </location>
</feature>
<protein>
    <recommendedName>
        <fullName>Isopentenyl-diphosphate Delta-isomerase 1</fullName>
        <ecNumber evidence="2">5.3.3.2</ecNumber>
    </recommendedName>
    <alternativeName>
        <fullName>Isopentenyl pyrophosphate isomerase 1</fullName>
        <shortName>IPP isomerase 1</shortName>
        <shortName>IPPI1</shortName>
    </alternativeName>
</protein>
<name>IDI1_MESAU</name>
<dbReference type="EC" id="5.3.3.2" evidence="2"/>
<dbReference type="EMBL" id="AF003836">
    <property type="protein sequence ID" value="AAC53283.1"/>
    <property type="molecule type" value="mRNA"/>
</dbReference>
<dbReference type="SMR" id="O35586"/>
<dbReference type="STRING" id="10036.ENSMAUP00000018134"/>
<dbReference type="eggNOG" id="KOG0142">
    <property type="taxonomic scope" value="Eukaryota"/>
</dbReference>
<dbReference type="BRENDA" id="5.3.3.2">
    <property type="organism ID" value="3239"/>
</dbReference>
<dbReference type="UniPathway" id="UPA00059">
    <property type="reaction ID" value="UER00104"/>
</dbReference>
<dbReference type="Proteomes" id="UP000189706">
    <property type="component" value="Unplaced"/>
</dbReference>
<dbReference type="GO" id="GO:0005777">
    <property type="term" value="C:peroxisome"/>
    <property type="evidence" value="ECO:0000314"/>
    <property type="project" value="UniProtKB"/>
</dbReference>
<dbReference type="GO" id="GO:0004452">
    <property type="term" value="F:isopentenyl-diphosphate delta-isomerase activity"/>
    <property type="evidence" value="ECO:0007669"/>
    <property type="project" value="UniProtKB-EC"/>
</dbReference>
<dbReference type="GO" id="GO:0046872">
    <property type="term" value="F:metal ion binding"/>
    <property type="evidence" value="ECO:0007669"/>
    <property type="project" value="UniProtKB-KW"/>
</dbReference>
<dbReference type="GO" id="GO:0006695">
    <property type="term" value="P:cholesterol biosynthetic process"/>
    <property type="evidence" value="ECO:0007669"/>
    <property type="project" value="UniProtKB-KW"/>
</dbReference>
<dbReference type="GO" id="GO:0050992">
    <property type="term" value="P:dimethylallyl diphosphate biosynthetic process"/>
    <property type="evidence" value="ECO:0007669"/>
    <property type="project" value="UniProtKB-UniPathway"/>
</dbReference>
<dbReference type="GO" id="GO:0009240">
    <property type="term" value="P:isopentenyl diphosphate biosynthetic process"/>
    <property type="evidence" value="ECO:0007669"/>
    <property type="project" value="TreeGrafter"/>
</dbReference>
<dbReference type="CDD" id="cd02885">
    <property type="entry name" value="NUDIX_IPP_Isomerase"/>
    <property type="match status" value="1"/>
</dbReference>
<dbReference type="FunFam" id="3.90.79.10:FF:000012">
    <property type="entry name" value="Isopentenyl-diphosphate Delta-isomerase 1"/>
    <property type="match status" value="1"/>
</dbReference>
<dbReference type="Gene3D" id="3.90.79.10">
    <property type="entry name" value="Nucleoside Triphosphate Pyrophosphohydrolase"/>
    <property type="match status" value="1"/>
</dbReference>
<dbReference type="InterPro" id="IPR011876">
    <property type="entry name" value="IsopentenylPP_isomerase_typ1"/>
</dbReference>
<dbReference type="InterPro" id="IPR015797">
    <property type="entry name" value="NUDIX_hydrolase-like_dom_sf"/>
</dbReference>
<dbReference type="InterPro" id="IPR000086">
    <property type="entry name" value="NUDIX_hydrolase_dom"/>
</dbReference>
<dbReference type="NCBIfam" id="TIGR02150">
    <property type="entry name" value="IPP_isom_1"/>
    <property type="match status" value="1"/>
</dbReference>
<dbReference type="PANTHER" id="PTHR10885">
    <property type="entry name" value="ISOPENTENYL-DIPHOSPHATE DELTA-ISOMERASE"/>
    <property type="match status" value="1"/>
</dbReference>
<dbReference type="PANTHER" id="PTHR10885:SF5">
    <property type="entry name" value="ISOPENTENYL-DIPHOSPHATE DELTA-ISOMERASE 1"/>
    <property type="match status" value="1"/>
</dbReference>
<dbReference type="Pfam" id="PF00293">
    <property type="entry name" value="NUDIX"/>
    <property type="match status" value="1"/>
</dbReference>
<dbReference type="PIRSF" id="PIRSF018427">
    <property type="entry name" value="Isopntndiph_ism"/>
    <property type="match status" value="1"/>
</dbReference>
<dbReference type="SUPFAM" id="SSF55811">
    <property type="entry name" value="Nudix"/>
    <property type="match status" value="1"/>
</dbReference>
<dbReference type="PROSITE" id="PS51462">
    <property type="entry name" value="NUDIX"/>
    <property type="match status" value="1"/>
</dbReference>
<accession>O35586</accession>
<comment type="function">
    <text evidence="2">Catalyzes the 1,3-allylic rearrangement of the homoallylic substrate isopentenyl (IPP) to its highly electrophilic allylic isomer, dimethylallyl diphosphate (DMAPP).</text>
</comment>
<comment type="catalytic activity">
    <reaction evidence="2">
        <text>isopentenyl diphosphate = dimethylallyl diphosphate</text>
        <dbReference type="Rhea" id="RHEA:23284"/>
        <dbReference type="ChEBI" id="CHEBI:57623"/>
        <dbReference type="ChEBI" id="CHEBI:128769"/>
        <dbReference type="EC" id="5.3.3.2"/>
    </reaction>
</comment>
<comment type="cofactor">
    <cofactor evidence="2">
        <name>Mg(2+)</name>
        <dbReference type="ChEBI" id="CHEBI:18420"/>
    </cofactor>
    <text evidence="2">Binds 1 Mg(2+) ion per subunit.</text>
</comment>
<comment type="pathway">
    <text evidence="2">Isoprenoid biosynthesis; dimethylallyl diphosphate biosynthesis; dimethylallyl diphosphate from isopentenyl diphosphate: step 1/1.</text>
</comment>
<comment type="subunit">
    <text evidence="2">Monomer.</text>
</comment>
<comment type="subcellular location">
    <subcellularLocation>
        <location evidence="4">Peroxisome</location>
    </subcellularLocation>
</comment>
<comment type="similarity">
    <text evidence="5">Belongs to the IPP isomerase type 1 family.</text>
</comment>
<evidence type="ECO:0000250" key="1"/>
<evidence type="ECO:0000250" key="2">
    <source>
        <dbReference type="UniProtKB" id="Q13907"/>
    </source>
</evidence>
<evidence type="ECO:0000255" key="3">
    <source>
        <dbReference type="PROSITE-ProRule" id="PRU00794"/>
    </source>
</evidence>
<evidence type="ECO:0000269" key="4">
    <source>
    </source>
</evidence>
<evidence type="ECO:0000305" key="5"/>
<organism>
    <name type="scientific">Mesocricetus auratus</name>
    <name type="common">Golden hamster</name>
    <dbReference type="NCBI Taxonomy" id="10036"/>
    <lineage>
        <taxon>Eukaryota</taxon>
        <taxon>Metazoa</taxon>
        <taxon>Chordata</taxon>
        <taxon>Craniata</taxon>
        <taxon>Vertebrata</taxon>
        <taxon>Euteleostomi</taxon>
        <taxon>Mammalia</taxon>
        <taxon>Eutheria</taxon>
        <taxon>Euarchontoglires</taxon>
        <taxon>Glires</taxon>
        <taxon>Rodentia</taxon>
        <taxon>Myomorpha</taxon>
        <taxon>Muroidea</taxon>
        <taxon>Cricetidae</taxon>
        <taxon>Cricetinae</taxon>
        <taxon>Mesocricetus</taxon>
    </lineage>
</organism>
<gene>
    <name type="primary">IDI1</name>
</gene>
<sequence>MPEINTSHLDEQQVQLLAEMCILIDENDNKIGADTKKNCHLNENIDKGLLHRAFSVFLFNTENKLLLQQRSDAKITFPGCFTNSCCSHPLSNPGELEENDAIGVKRAAQRRLKAELGIPLEEVDPNEMHYLTRIYYKAQSDGIWGEHEIDYILFLKKNVTLNPDPNEIKSYCYVSKEELKELVKKAASGEVKLTPWFKIIVDTFLFKWWDNLNHLSQFVDHEKIHRM</sequence>